<protein>
    <recommendedName>
        <fullName>Porphobilinogen deaminase, chloroplastic</fullName>
        <shortName>PBG</shortName>
        <ecNumber>2.5.1.61</ecNumber>
    </recommendedName>
    <alternativeName>
        <fullName>Hydroxymethylbilane synthase</fullName>
        <shortName>HMBS</shortName>
    </alternativeName>
    <alternativeName>
        <fullName>Pre-uroporphyrinogen synthase</fullName>
    </alternativeName>
</protein>
<reference key="1">
    <citation type="journal article" date="2005" name="Nature">
        <title>The map-based sequence of the rice genome.</title>
        <authorList>
            <consortium name="International rice genome sequencing project (IRGSP)"/>
        </authorList>
    </citation>
    <scope>NUCLEOTIDE SEQUENCE [LARGE SCALE GENOMIC DNA]</scope>
    <source>
        <strain>cv. Nipponbare</strain>
    </source>
</reference>
<reference key="2">
    <citation type="journal article" date="2008" name="Nucleic Acids Res.">
        <title>The rice annotation project database (RAP-DB): 2008 update.</title>
        <authorList>
            <consortium name="The rice annotation project (RAP)"/>
        </authorList>
    </citation>
    <scope>GENOME REANNOTATION</scope>
    <source>
        <strain>cv. Nipponbare</strain>
    </source>
</reference>
<reference key="3">
    <citation type="journal article" date="2013" name="Rice">
        <title>Improvement of the Oryza sativa Nipponbare reference genome using next generation sequence and optical map data.</title>
        <authorList>
            <person name="Kawahara Y."/>
            <person name="de la Bastide M."/>
            <person name="Hamilton J.P."/>
            <person name="Kanamori H."/>
            <person name="McCombie W.R."/>
            <person name="Ouyang S."/>
            <person name="Schwartz D.C."/>
            <person name="Tanaka T."/>
            <person name="Wu J."/>
            <person name="Zhou S."/>
            <person name="Childs K.L."/>
            <person name="Davidson R.M."/>
            <person name="Lin H."/>
            <person name="Quesada-Ocampo L."/>
            <person name="Vaillancourt B."/>
            <person name="Sakai H."/>
            <person name="Lee S.S."/>
            <person name="Kim J."/>
            <person name="Numa H."/>
            <person name="Itoh T."/>
            <person name="Buell C.R."/>
            <person name="Matsumoto T."/>
        </authorList>
    </citation>
    <scope>GENOME REANNOTATION</scope>
    <source>
        <strain>cv. Nipponbare</strain>
    </source>
</reference>
<reference key="4">
    <citation type="journal article" date="2005" name="PLoS Biol.">
        <title>The genomes of Oryza sativa: a history of duplications.</title>
        <authorList>
            <person name="Yu J."/>
            <person name="Wang J."/>
            <person name="Lin W."/>
            <person name="Li S."/>
            <person name="Li H."/>
            <person name="Zhou J."/>
            <person name="Ni P."/>
            <person name="Dong W."/>
            <person name="Hu S."/>
            <person name="Zeng C."/>
            <person name="Zhang J."/>
            <person name="Zhang Y."/>
            <person name="Li R."/>
            <person name="Xu Z."/>
            <person name="Li S."/>
            <person name="Li X."/>
            <person name="Zheng H."/>
            <person name="Cong L."/>
            <person name="Lin L."/>
            <person name="Yin J."/>
            <person name="Geng J."/>
            <person name="Li G."/>
            <person name="Shi J."/>
            <person name="Liu J."/>
            <person name="Lv H."/>
            <person name="Li J."/>
            <person name="Wang J."/>
            <person name="Deng Y."/>
            <person name="Ran L."/>
            <person name="Shi X."/>
            <person name="Wang X."/>
            <person name="Wu Q."/>
            <person name="Li C."/>
            <person name="Ren X."/>
            <person name="Wang J."/>
            <person name="Wang X."/>
            <person name="Li D."/>
            <person name="Liu D."/>
            <person name="Zhang X."/>
            <person name="Ji Z."/>
            <person name="Zhao W."/>
            <person name="Sun Y."/>
            <person name="Zhang Z."/>
            <person name="Bao J."/>
            <person name="Han Y."/>
            <person name="Dong L."/>
            <person name="Ji J."/>
            <person name="Chen P."/>
            <person name="Wu S."/>
            <person name="Liu J."/>
            <person name="Xiao Y."/>
            <person name="Bu D."/>
            <person name="Tan J."/>
            <person name="Yang L."/>
            <person name="Ye C."/>
            <person name="Zhang J."/>
            <person name="Xu J."/>
            <person name="Zhou Y."/>
            <person name="Yu Y."/>
            <person name="Zhang B."/>
            <person name="Zhuang S."/>
            <person name="Wei H."/>
            <person name="Liu B."/>
            <person name="Lei M."/>
            <person name="Yu H."/>
            <person name="Li Y."/>
            <person name="Xu H."/>
            <person name="Wei S."/>
            <person name="He X."/>
            <person name="Fang L."/>
            <person name="Zhang Z."/>
            <person name="Zhang Y."/>
            <person name="Huang X."/>
            <person name="Su Z."/>
            <person name="Tong W."/>
            <person name="Li J."/>
            <person name="Tong Z."/>
            <person name="Li S."/>
            <person name="Ye J."/>
            <person name="Wang L."/>
            <person name="Fang L."/>
            <person name="Lei T."/>
            <person name="Chen C.-S."/>
            <person name="Chen H.-C."/>
            <person name="Xu Z."/>
            <person name="Li H."/>
            <person name="Huang H."/>
            <person name="Zhang F."/>
            <person name="Xu H."/>
            <person name="Li N."/>
            <person name="Zhao C."/>
            <person name="Li S."/>
            <person name="Dong L."/>
            <person name="Huang Y."/>
            <person name="Li L."/>
            <person name="Xi Y."/>
            <person name="Qi Q."/>
            <person name="Li W."/>
            <person name="Zhang B."/>
            <person name="Hu W."/>
            <person name="Zhang Y."/>
            <person name="Tian X."/>
            <person name="Jiao Y."/>
            <person name="Liang X."/>
            <person name="Jin J."/>
            <person name="Gao L."/>
            <person name="Zheng W."/>
            <person name="Hao B."/>
            <person name="Liu S.-M."/>
            <person name="Wang W."/>
            <person name="Yuan L."/>
            <person name="Cao M."/>
            <person name="McDermott J."/>
            <person name="Samudrala R."/>
            <person name="Wang J."/>
            <person name="Wong G.K.-S."/>
            <person name="Yang H."/>
        </authorList>
    </citation>
    <scope>NUCLEOTIDE SEQUENCE [LARGE SCALE GENOMIC DNA]</scope>
    <source>
        <strain>cv. Nipponbare</strain>
    </source>
</reference>
<reference key="5">
    <citation type="journal article" date="2003" name="Science">
        <title>Collection, mapping, and annotation of over 28,000 cDNA clones from japonica rice.</title>
        <authorList>
            <consortium name="The rice full-length cDNA consortium"/>
        </authorList>
    </citation>
    <scope>NUCLEOTIDE SEQUENCE [LARGE SCALE MRNA] (ISOFORMS 1 AND 2)</scope>
    <source>
        <strain>cv. Nipponbare</strain>
    </source>
</reference>
<accession>Q6H6D2</accession>
<accession>A0A0P0VF64</accession>
<accession>Q6H6D1</accession>
<evidence type="ECO:0000250" key="1"/>
<evidence type="ECO:0000255" key="2"/>
<evidence type="ECO:0000303" key="3">
    <source>
    </source>
</evidence>
<evidence type="ECO:0000305" key="4"/>
<organism>
    <name type="scientific">Oryza sativa subsp. japonica</name>
    <name type="common">Rice</name>
    <dbReference type="NCBI Taxonomy" id="39947"/>
    <lineage>
        <taxon>Eukaryota</taxon>
        <taxon>Viridiplantae</taxon>
        <taxon>Streptophyta</taxon>
        <taxon>Embryophyta</taxon>
        <taxon>Tracheophyta</taxon>
        <taxon>Spermatophyta</taxon>
        <taxon>Magnoliopsida</taxon>
        <taxon>Liliopsida</taxon>
        <taxon>Poales</taxon>
        <taxon>Poaceae</taxon>
        <taxon>BOP clade</taxon>
        <taxon>Oryzoideae</taxon>
        <taxon>Oryzeae</taxon>
        <taxon>Oryzinae</taxon>
        <taxon>Oryza</taxon>
        <taxon>Oryza sativa</taxon>
    </lineage>
</organism>
<name>HEM3_ORYSJ</name>
<comment type="function">
    <text>Tetrapolymerization of the monopyrrole PBG into the hydroxymethylbilane pre-uroporphyrinogen in several discrete steps.</text>
</comment>
<comment type="catalytic activity">
    <reaction>
        <text>4 porphobilinogen + H2O = hydroxymethylbilane + 4 NH4(+)</text>
        <dbReference type="Rhea" id="RHEA:13185"/>
        <dbReference type="ChEBI" id="CHEBI:15377"/>
        <dbReference type="ChEBI" id="CHEBI:28938"/>
        <dbReference type="ChEBI" id="CHEBI:57845"/>
        <dbReference type="ChEBI" id="CHEBI:58126"/>
        <dbReference type="EC" id="2.5.1.61"/>
    </reaction>
</comment>
<comment type="cofactor">
    <cofactor>
        <name>dipyrromethane</name>
        <dbReference type="ChEBI" id="CHEBI:60342"/>
    </cofactor>
    <text>Binds 1 dipyrromethane group covalently.</text>
</comment>
<comment type="pathway">
    <text>Porphyrin-containing compound metabolism; protoporphyrin-IX biosynthesis; coproporphyrinogen-III from 5-aminolevulinate: step 2/4.</text>
</comment>
<comment type="pathway">
    <text>Porphyrin-containing compound metabolism; chlorophyll biosynthesis.</text>
</comment>
<comment type="subcellular location">
    <subcellularLocation>
        <location evidence="4">Plastid</location>
        <location evidence="4">Chloroplast</location>
    </subcellularLocation>
</comment>
<comment type="alternative products">
    <event type="alternative splicing"/>
    <isoform>
        <id>Q6H6D2-1</id>
        <name>1</name>
        <sequence type="displayed"/>
    </isoform>
    <isoform>
        <id>Q6H6D2-2</id>
        <name>2</name>
        <sequence type="described" ref="VSP_037401"/>
    </isoform>
</comment>
<comment type="miscellaneous">
    <text evidence="1">The porphobilinogen subunits are added to the dipyrromethane group.</text>
</comment>
<comment type="similarity">
    <text evidence="4">Belongs to the HMBS family.</text>
</comment>
<dbReference type="EC" id="2.5.1.61"/>
<dbReference type="EMBL" id="AP005071">
    <property type="protein sequence ID" value="BAD25717.1"/>
    <property type="molecule type" value="Genomic_DNA"/>
</dbReference>
<dbReference type="EMBL" id="AP005071">
    <property type="protein sequence ID" value="BAD25718.1"/>
    <property type="molecule type" value="Genomic_DNA"/>
</dbReference>
<dbReference type="EMBL" id="AP008208">
    <property type="protein sequence ID" value="BAF07931.1"/>
    <property type="molecule type" value="Genomic_DNA"/>
</dbReference>
<dbReference type="EMBL" id="AP014958">
    <property type="protein sequence ID" value="BAS77179.1"/>
    <property type="molecule type" value="Genomic_DNA"/>
</dbReference>
<dbReference type="EMBL" id="CM000139">
    <property type="protein sequence ID" value="EEE56391.1"/>
    <property type="molecule type" value="Genomic_DNA"/>
</dbReference>
<dbReference type="EMBL" id="AK060914">
    <property type="protein sequence ID" value="BAG87614.1"/>
    <property type="molecule type" value="mRNA"/>
</dbReference>
<dbReference type="EMBL" id="AK102265">
    <property type="protein sequence ID" value="BAG95470.1"/>
    <property type="molecule type" value="mRNA"/>
</dbReference>
<dbReference type="RefSeq" id="XP_015627255.1">
    <property type="nucleotide sequence ID" value="XM_015771769.1"/>
</dbReference>
<dbReference type="SMR" id="Q6H6D2"/>
<dbReference type="FunCoup" id="Q6H6D2">
    <property type="interactions" value="2128"/>
</dbReference>
<dbReference type="STRING" id="39947.Q6H6D2"/>
<dbReference type="PaxDb" id="39947-Q6H6D2"/>
<dbReference type="EnsemblPlants" id="Os02t0168800-01">
    <molecule id="Q6H6D2-1"/>
    <property type="protein sequence ID" value="Os02t0168800-01"/>
    <property type="gene ID" value="Os02g0168800"/>
</dbReference>
<dbReference type="Gramene" id="Os02t0168800-01">
    <molecule id="Q6H6D2-1"/>
    <property type="protein sequence ID" value="Os02t0168800-01"/>
    <property type="gene ID" value="Os02g0168800"/>
</dbReference>
<dbReference type="KEGG" id="dosa:Os02g0168800"/>
<dbReference type="eggNOG" id="KOG2892">
    <property type="taxonomic scope" value="Eukaryota"/>
</dbReference>
<dbReference type="InParanoid" id="Q6H6D2"/>
<dbReference type="OMA" id="LWQANHI"/>
<dbReference type="OrthoDB" id="564646at2759"/>
<dbReference type="PlantReactome" id="R-OSA-4827054">
    <property type="pathway name" value="Tetrapyrrole biosynthesis I"/>
</dbReference>
<dbReference type="UniPathway" id="UPA00251">
    <property type="reaction ID" value="UER00319"/>
</dbReference>
<dbReference type="UniPathway" id="UPA00668"/>
<dbReference type="Proteomes" id="UP000000763">
    <property type="component" value="Chromosome 2"/>
</dbReference>
<dbReference type="Proteomes" id="UP000007752">
    <property type="component" value="Chromosome 2"/>
</dbReference>
<dbReference type="Proteomes" id="UP000059680">
    <property type="component" value="Chromosome 2"/>
</dbReference>
<dbReference type="ExpressionAtlas" id="Q6H6D2">
    <property type="expression patterns" value="baseline and differential"/>
</dbReference>
<dbReference type="GO" id="GO:0009507">
    <property type="term" value="C:chloroplast"/>
    <property type="evidence" value="ECO:0007669"/>
    <property type="project" value="UniProtKB-SubCell"/>
</dbReference>
<dbReference type="GO" id="GO:0005737">
    <property type="term" value="C:cytoplasm"/>
    <property type="evidence" value="ECO:0000318"/>
    <property type="project" value="GO_Central"/>
</dbReference>
<dbReference type="GO" id="GO:0004418">
    <property type="term" value="F:hydroxymethylbilane synthase activity"/>
    <property type="evidence" value="ECO:0000318"/>
    <property type="project" value="GO_Central"/>
</dbReference>
<dbReference type="GO" id="GO:0015995">
    <property type="term" value="P:chlorophyll biosynthetic process"/>
    <property type="evidence" value="ECO:0007669"/>
    <property type="project" value="UniProtKB-UniPathway"/>
</dbReference>
<dbReference type="GO" id="GO:1900865">
    <property type="term" value="P:chloroplast RNA modification"/>
    <property type="evidence" value="ECO:0007669"/>
    <property type="project" value="EnsemblPlants"/>
</dbReference>
<dbReference type="GO" id="GO:0006783">
    <property type="term" value="P:heme biosynthetic process"/>
    <property type="evidence" value="ECO:0000318"/>
    <property type="project" value="GO_Central"/>
</dbReference>
<dbReference type="GO" id="GO:0006782">
    <property type="term" value="P:protoporphyrinogen IX biosynthetic process"/>
    <property type="evidence" value="ECO:0007669"/>
    <property type="project" value="UniProtKB-UniPathway"/>
</dbReference>
<dbReference type="CDD" id="cd13648">
    <property type="entry name" value="PBP2_PBGD_1"/>
    <property type="match status" value="1"/>
</dbReference>
<dbReference type="FunFam" id="3.30.160.40:FF:000001">
    <property type="entry name" value="Porphobilinogen deaminase"/>
    <property type="match status" value="1"/>
</dbReference>
<dbReference type="FunFam" id="3.40.190.10:FF:000004">
    <property type="entry name" value="Porphobilinogen deaminase"/>
    <property type="match status" value="1"/>
</dbReference>
<dbReference type="FunFam" id="3.40.190.10:FF:000101">
    <property type="entry name" value="Porphobilinogen deaminase, chloroplastic"/>
    <property type="match status" value="1"/>
</dbReference>
<dbReference type="Gene3D" id="3.40.190.10">
    <property type="entry name" value="Periplasmic binding protein-like II"/>
    <property type="match status" value="2"/>
</dbReference>
<dbReference type="Gene3D" id="3.30.160.40">
    <property type="entry name" value="Porphobilinogen deaminase, C-terminal domain"/>
    <property type="match status" value="1"/>
</dbReference>
<dbReference type="HAMAP" id="MF_00260">
    <property type="entry name" value="Porphobil_deam"/>
    <property type="match status" value="1"/>
</dbReference>
<dbReference type="InterPro" id="IPR000860">
    <property type="entry name" value="HemC"/>
</dbReference>
<dbReference type="InterPro" id="IPR022419">
    <property type="entry name" value="Porphobilin_deaminase_cofac_BS"/>
</dbReference>
<dbReference type="InterPro" id="IPR022417">
    <property type="entry name" value="Porphobilin_deaminase_N"/>
</dbReference>
<dbReference type="InterPro" id="IPR022418">
    <property type="entry name" value="Porphobilinogen_deaminase_C"/>
</dbReference>
<dbReference type="InterPro" id="IPR036803">
    <property type="entry name" value="Porphobilinogen_deaminase_C_sf"/>
</dbReference>
<dbReference type="NCBIfam" id="TIGR00212">
    <property type="entry name" value="hemC"/>
    <property type="match status" value="1"/>
</dbReference>
<dbReference type="PANTHER" id="PTHR11557">
    <property type="entry name" value="PORPHOBILINOGEN DEAMINASE"/>
    <property type="match status" value="1"/>
</dbReference>
<dbReference type="PANTHER" id="PTHR11557:SF0">
    <property type="entry name" value="PORPHOBILINOGEN DEAMINASE"/>
    <property type="match status" value="1"/>
</dbReference>
<dbReference type="Pfam" id="PF01379">
    <property type="entry name" value="Porphobil_deam"/>
    <property type="match status" value="1"/>
</dbReference>
<dbReference type="Pfam" id="PF03900">
    <property type="entry name" value="Porphobil_deamC"/>
    <property type="match status" value="1"/>
</dbReference>
<dbReference type="PIRSF" id="PIRSF001438">
    <property type="entry name" value="4pyrrol_synth_OHMeBilane_synth"/>
    <property type="match status" value="1"/>
</dbReference>
<dbReference type="PRINTS" id="PR00151">
    <property type="entry name" value="PORPHBDMNASE"/>
</dbReference>
<dbReference type="SUPFAM" id="SSF53850">
    <property type="entry name" value="Periplasmic binding protein-like II"/>
    <property type="match status" value="1"/>
</dbReference>
<dbReference type="SUPFAM" id="SSF54782">
    <property type="entry name" value="Porphobilinogen deaminase (hydroxymethylbilane synthase), C-terminal domain"/>
    <property type="match status" value="1"/>
</dbReference>
<dbReference type="PROSITE" id="PS00533">
    <property type="entry name" value="PORPHOBILINOGEN_DEAM"/>
    <property type="match status" value="1"/>
</dbReference>
<feature type="signal peptide" evidence="2">
    <location>
        <begin position="1"/>
        <end position="24"/>
    </location>
</feature>
<feature type="chain" id="PRO_0000376066" description="Porphobilinogen deaminase, chloroplastic">
    <location>
        <begin position="25"/>
        <end position="358"/>
    </location>
</feature>
<feature type="modified residue" description="S-(dipyrrolylmethanemethyl)cysteine" evidence="1">
    <location>
        <position position="290"/>
    </location>
</feature>
<feature type="splice variant" id="VSP_037401" description="In isoform 2." evidence="3">
    <location>
        <begin position="1"/>
        <end position="94"/>
    </location>
</feature>
<keyword id="KW-0025">Alternative splicing</keyword>
<keyword id="KW-0149">Chlorophyll biosynthesis</keyword>
<keyword id="KW-0150">Chloroplast</keyword>
<keyword id="KW-0934">Plastid</keyword>
<keyword id="KW-0627">Porphyrin biosynthesis</keyword>
<keyword id="KW-1185">Reference proteome</keyword>
<keyword id="KW-0732">Signal</keyword>
<keyword id="KW-0808">Transferase</keyword>
<proteinExistence type="evidence at transcript level"/>
<gene>
    <name type="primary">HEMC</name>
    <name type="ordered locus">Os02g0168800</name>
    <name type="ordered locus">LOC_Os02g07230</name>
    <name type="ORF">OsJ_05540</name>
    <name type="ORF">P0669G09.15-1</name>
    <name type="ORF">P0669G09.15-2</name>
</gene>
<sequence>MPPPPRCAATTAHHSLLGSPTCLARPRRRCCPVRAAVAVQAEAQAKVSLIRIGTRGSPLALAQAHETRDKLKAAHSELAEEGAVEIVIIKTTGDMILDKPLADIGGKGLFTKEIDDALLQGRIDIAVHSMKDVPTYLPEGTILPCNLPREDVRDAFICLTASSLAELPAGSVVGSASLRRQSQILYKYPSLKVVNFRGNVQTRLRKLKEGDVHATLLALAGLKRLNMAETATSVLSVDEMLPAVAQGAIGIACRSSDDTMMNYLSSLNHEDTRLAVACEREFLSVLDGNCRTPIAAYASRDKDGNCSFRGLLASPDGSTVYETSRTGPYDFDIMVEMGKDAGHELKAKAGPGFFDSLQ</sequence>